<dbReference type="EMBL" id="CP000901">
    <property type="protein sequence ID" value="ABX87452.1"/>
    <property type="molecule type" value="Genomic_DNA"/>
</dbReference>
<dbReference type="RefSeq" id="WP_002211830.1">
    <property type="nucleotide sequence ID" value="NZ_CP009935.1"/>
</dbReference>
<dbReference type="SMR" id="A9R0A2"/>
<dbReference type="GeneID" id="97456078"/>
<dbReference type="KEGG" id="ypg:YpAngola_A2619"/>
<dbReference type="PATRIC" id="fig|349746.12.peg.3646"/>
<dbReference type="GO" id="GO:0005829">
    <property type="term" value="C:cytosol"/>
    <property type="evidence" value="ECO:0007669"/>
    <property type="project" value="TreeGrafter"/>
</dbReference>
<dbReference type="GO" id="GO:0003677">
    <property type="term" value="F:DNA binding"/>
    <property type="evidence" value="ECO:0007669"/>
    <property type="project" value="UniProtKB-UniRule"/>
</dbReference>
<dbReference type="GO" id="GO:0030527">
    <property type="term" value="F:structural constituent of chromatin"/>
    <property type="evidence" value="ECO:0007669"/>
    <property type="project" value="InterPro"/>
</dbReference>
<dbReference type="GO" id="GO:0006310">
    <property type="term" value="P:DNA recombination"/>
    <property type="evidence" value="ECO:0007669"/>
    <property type="project" value="UniProtKB-UniRule"/>
</dbReference>
<dbReference type="GO" id="GO:0009893">
    <property type="term" value="P:positive regulation of metabolic process"/>
    <property type="evidence" value="ECO:0007669"/>
    <property type="project" value="UniProtKB-ARBA"/>
</dbReference>
<dbReference type="GO" id="GO:0006355">
    <property type="term" value="P:regulation of DNA-templated transcription"/>
    <property type="evidence" value="ECO:0007669"/>
    <property type="project" value="UniProtKB-UniRule"/>
</dbReference>
<dbReference type="GO" id="GO:0006417">
    <property type="term" value="P:regulation of translation"/>
    <property type="evidence" value="ECO:0007669"/>
    <property type="project" value="UniProtKB-UniRule"/>
</dbReference>
<dbReference type="CDD" id="cd13835">
    <property type="entry name" value="IHF_A"/>
    <property type="match status" value="1"/>
</dbReference>
<dbReference type="FunFam" id="4.10.520.10:FF:000002">
    <property type="entry name" value="Integration host factor subunit alpha"/>
    <property type="match status" value="1"/>
</dbReference>
<dbReference type="Gene3D" id="4.10.520.10">
    <property type="entry name" value="IHF-like DNA-binding proteins"/>
    <property type="match status" value="1"/>
</dbReference>
<dbReference type="HAMAP" id="MF_00380">
    <property type="entry name" value="IHF_alpha"/>
    <property type="match status" value="1"/>
</dbReference>
<dbReference type="InterPro" id="IPR000119">
    <property type="entry name" value="Hist_DNA-bd"/>
</dbReference>
<dbReference type="InterPro" id="IPR020816">
    <property type="entry name" value="Histone-like_DNA-bd_CS"/>
</dbReference>
<dbReference type="InterPro" id="IPR010992">
    <property type="entry name" value="IHF-like_DNA-bd_dom_sf"/>
</dbReference>
<dbReference type="InterPro" id="IPR005684">
    <property type="entry name" value="IHF_alpha"/>
</dbReference>
<dbReference type="NCBIfam" id="TIGR00987">
    <property type="entry name" value="himA"/>
    <property type="match status" value="1"/>
</dbReference>
<dbReference type="NCBIfam" id="NF001401">
    <property type="entry name" value="PRK00285.1"/>
    <property type="match status" value="1"/>
</dbReference>
<dbReference type="PANTHER" id="PTHR33175">
    <property type="entry name" value="DNA-BINDING PROTEIN HU"/>
    <property type="match status" value="1"/>
</dbReference>
<dbReference type="PANTHER" id="PTHR33175:SF2">
    <property type="entry name" value="INTEGRATION HOST FACTOR SUBUNIT ALPHA"/>
    <property type="match status" value="1"/>
</dbReference>
<dbReference type="Pfam" id="PF00216">
    <property type="entry name" value="Bac_DNA_binding"/>
    <property type="match status" value="1"/>
</dbReference>
<dbReference type="PRINTS" id="PR01727">
    <property type="entry name" value="DNABINDINGHU"/>
</dbReference>
<dbReference type="SMART" id="SM00411">
    <property type="entry name" value="BHL"/>
    <property type="match status" value="1"/>
</dbReference>
<dbReference type="SUPFAM" id="SSF47729">
    <property type="entry name" value="IHF-like DNA-binding proteins"/>
    <property type="match status" value="1"/>
</dbReference>
<dbReference type="PROSITE" id="PS00045">
    <property type="entry name" value="HISTONE_LIKE"/>
    <property type="match status" value="1"/>
</dbReference>
<name>IHFA_YERPG</name>
<sequence length="98" mass="11186">MALTKAEMSEHLFEKLGLSKRDAKDLVELFFEEVRRALENGEQVKLSGFGNFDLRDKNQRPGRNPKTGEDIPITARRVVTFRPGQKLKSRVESATPKE</sequence>
<feature type="chain" id="PRO_1000122178" description="Integration host factor subunit alpha">
    <location>
        <begin position="1"/>
        <end position="98"/>
    </location>
</feature>
<feature type="region of interest" description="Disordered" evidence="2">
    <location>
        <begin position="49"/>
        <end position="70"/>
    </location>
</feature>
<comment type="function">
    <text evidence="1">This protein is one of the two subunits of integration host factor, a specific DNA-binding protein that functions in genetic recombination as well as in transcriptional and translational control.</text>
</comment>
<comment type="subunit">
    <text evidence="1">Heterodimer of an alpha and a beta chain.</text>
</comment>
<comment type="similarity">
    <text evidence="1">Belongs to the bacterial histone-like protein family.</text>
</comment>
<proteinExistence type="inferred from homology"/>
<keyword id="KW-0233">DNA recombination</keyword>
<keyword id="KW-0238">DNA-binding</keyword>
<keyword id="KW-0804">Transcription</keyword>
<keyword id="KW-0805">Transcription regulation</keyword>
<keyword id="KW-0810">Translation regulation</keyword>
<accession>A9R0A2</accession>
<reference key="1">
    <citation type="journal article" date="2010" name="J. Bacteriol.">
        <title>Genome sequence of the deep-rooted Yersinia pestis strain Angola reveals new insights into the evolution and pangenome of the plague bacterium.</title>
        <authorList>
            <person name="Eppinger M."/>
            <person name="Worsham P.L."/>
            <person name="Nikolich M.P."/>
            <person name="Riley D.R."/>
            <person name="Sebastian Y."/>
            <person name="Mou S."/>
            <person name="Achtman M."/>
            <person name="Lindler L.E."/>
            <person name="Ravel J."/>
        </authorList>
    </citation>
    <scope>NUCLEOTIDE SEQUENCE [LARGE SCALE GENOMIC DNA]</scope>
    <source>
        <strain>Angola</strain>
    </source>
</reference>
<gene>
    <name evidence="1" type="primary">ihfA</name>
    <name evidence="1" type="synonym">himA</name>
    <name type="ordered locus">YpAngola_A2619</name>
</gene>
<organism>
    <name type="scientific">Yersinia pestis bv. Antiqua (strain Angola)</name>
    <dbReference type="NCBI Taxonomy" id="349746"/>
    <lineage>
        <taxon>Bacteria</taxon>
        <taxon>Pseudomonadati</taxon>
        <taxon>Pseudomonadota</taxon>
        <taxon>Gammaproteobacteria</taxon>
        <taxon>Enterobacterales</taxon>
        <taxon>Yersiniaceae</taxon>
        <taxon>Yersinia</taxon>
    </lineage>
</organism>
<protein>
    <recommendedName>
        <fullName evidence="1">Integration host factor subunit alpha</fullName>
        <shortName evidence="1">IHF-alpha</shortName>
    </recommendedName>
</protein>
<evidence type="ECO:0000255" key="1">
    <source>
        <dbReference type="HAMAP-Rule" id="MF_00380"/>
    </source>
</evidence>
<evidence type="ECO:0000256" key="2">
    <source>
        <dbReference type="SAM" id="MobiDB-lite"/>
    </source>
</evidence>